<feature type="chain" id="PRO_1000091527" description="Serine hydroxymethyltransferase">
    <location>
        <begin position="1"/>
        <end position="440"/>
    </location>
</feature>
<feature type="binding site" evidence="1">
    <location>
        <position position="119"/>
    </location>
    <ligand>
        <name>(6S)-5,6,7,8-tetrahydrofolate</name>
        <dbReference type="ChEBI" id="CHEBI:57453"/>
    </ligand>
</feature>
<feature type="binding site" evidence="1">
    <location>
        <begin position="123"/>
        <end position="125"/>
    </location>
    <ligand>
        <name>(6S)-5,6,7,8-tetrahydrofolate</name>
        <dbReference type="ChEBI" id="CHEBI:57453"/>
    </ligand>
</feature>
<feature type="binding site" evidence="1">
    <location>
        <begin position="370"/>
        <end position="372"/>
    </location>
    <ligand>
        <name>(6S)-5,6,7,8-tetrahydrofolate</name>
        <dbReference type="ChEBI" id="CHEBI:57453"/>
    </ligand>
</feature>
<feature type="site" description="Plays an important role in substrate specificity" evidence="1">
    <location>
        <position position="227"/>
    </location>
</feature>
<feature type="modified residue" description="N6-(pyridoxal phosphate)lysine" evidence="1">
    <location>
        <position position="228"/>
    </location>
</feature>
<proteinExistence type="inferred from homology"/>
<name>GLYA_CHLT3</name>
<comment type="function">
    <text evidence="1">Catalyzes the reversible interconversion of serine and glycine with tetrahydrofolate (THF) serving as the one-carbon carrier. This reaction serves as the major source of one-carbon groups required for the biosynthesis of purines, thymidylate, methionine, and other important biomolecules. Also exhibits THF-independent aldolase activity toward beta-hydroxyamino acids, producing glycine and aldehydes, via a retro-aldol mechanism.</text>
</comment>
<comment type="catalytic activity">
    <reaction evidence="1">
        <text>(6R)-5,10-methylene-5,6,7,8-tetrahydrofolate + glycine + H2O = (6S)-5,6,7,8-tetrahydrofolate + L-serine</text>
        <dbReference type="Rhea" id="RHEA:15481"/>
        <dbReference type="ChEBI" id="CHEBI:15377"/>
        <dbReference type="ChEBI" id="CHEBI:15636"/>
        <dbReference type="ChEBI" id="CHEBI:33384"/>
        <dbReference type="ChEBI" id="CHEBI:57305"/>
        <dbReference type="ChEBI" id="CHEBI:57453"/>
        <dbReference type="EC" id="2.1.2.1"/>
    </reaction>
</comment>
<comment type="cofactor">
    <cofactor evidence="1">
        <name>pyridoxal 5'-phosphate</name>
        <dbReference type="ChEBI" id="CHEBI:597326"/>
    </cofactor>
</comment>
<comment type="pathway">
    <text evidence="1">One-carbon metabolism; tetrahydrofolate interconversion.</text>
</comment>
<comment type="pathway">
    <text evidence="1">Amino-acid biosynthesis; glycine biosynthesis; glycine from L-serine: step 1/1.</text>
</comment>
<comment type="subunit">
    <text evidence="1">Homodimer.</text>
</comment>
<comment type="subcellular location">
    <subcellularLocation>
        <location evidence="1">Cytoplasm</location>
    </subcellularLocation>
</comment>
<comment type="similarity">
    <text evidence="1">Belongs to the SHMT family.</text>
</comment>
<reference key="1">
    <citation type="submission" date="2008-06" db="EMBL/GenBank/DDBJ databases">
        <title>Complete sequence of Chloroherpeton thalassium ATCC 35110.</title>
        <authorList>
            <consortium name="US DOE Joint Genome Institute"/>
            <person name="Lucas S."/>
            <person name="Copeland A."/>
            <person name="Lapidus A."/>
            <person name="Glavina del Rio T."/>
            <person name="Dalin E."/>
            <person name="Tice H."/>
            <person name="Bruce D."/>
            <person name="Goodwin L."/>
            <person name="Pitluck S."/>
            <person name="Schmutz J."/>
            <person name="Larimer F."/>
            <person name="Land M."/>
            <person name="Hauser L."/>
            <person name="Kyrpides N."/>
            <person name="Mikhailova N."/>
            <person name="Liu Z."/>
            <person name="Li T."/>
            <person name="Zhao F."/>
            <person name="Overmann J."/>
            <person name="Bryant D.A."/>
            <person name="Richardson P."/>
        </authorList>
    </citation>
    <scope>NUCLEOTIDE SEQUENCE [LARGE SCALE GENOMIC DNA]</scope>
    <source>
        <strain>ATCC 35110 / GB-78</strain>
    </source>
</reference>
<dbReference type="EC" id="2.1.2.1" evidence="1"/>
<dbReference type="EMBL" id="CP001100">
    <property type="protein sequence ID" value="ACF14411.1"/>
    <property type="molecule type" value="Genomic_DNA"/>
</dbReference>
<dbReference type="RefSeq" id="WP_012500494.1">
    <property type="nucleotide sequence ID" value="NC_011026.1"/>
</dbReference>
<dbReference type="SMR" id="B3QUG2"/>
<dbReference type="STRING" id="517418.Ctha_1957"/>
<dbReference type="KEGG" id="cts:Ctha_1957"/>
<dbReference type="eggNOG" id="COG0112">
    <property type="taxonomic scope" value="Bacteria"/>
</dbReference>
<dbReference type="HOGENOM" id="CLU_022477_2_1_10"/>
<dbReference type="OrthoDB" id="9803846at2"/>
<dbReference type="UniPathway" id="UPA00193"/>
<dbReference type="UniPathway" id="UPA00288">
    <property type="reaction ID" value="UER01023"/>
</dbReference>
<dbReference type="Proteomes" id="UP000001208">
    <property type="component" value="Chromosome"/>
</dbReference>
<dbReference type="GO" id="GO:0005829">
    <property type="term" value="C:cytosol"/>
    <property type="evidence" value="ECO:0007669"/>
    <property type="project" value="TreeGrafter"/>
</dbReference>
<dbReference type="GO" id="GO:0004372">
    <property type="term" value="F:glycine hydroxymethyltransferase activity"/>
    <property type="evidence" value="ECO:0007669"/>
    <property type="project" value="UniProtKB-UniRule"/>
</dbReference>
<dbReference type="GO" id="GO:0030170">
    <property type="term" value="F:pyridoxal phosphate binding"/>
    <property type="evidence" value="ECO:0007669"/>
    <property type="project" value="UniProtKB-UniRule"/>
</dbReference>
<dbReference type="GO" id="GO:0019264">
    <property type="term" value="P:glycine biosynthetic process from serine"/>
    <property type="evidence" value="ECO:0007669"/>
    <property type="project" value="UniProtKB-UniRule"/>
</dbReference>
<dbReference type="GO" id="GO:0035999">
    <property type="term" value="P:tetrahydrofolate interconversion"/>
    <property type="evidence" value="ECO:0007669"/>
    <property type="project" value="UniProtKB-UniRule"/>
</dbReference>
<dbReference type="CDD" id="cd00378">
    <property type="entry name" value="SHMT"/>
    <property type="match status" value="1"/>
</dbReference>
<dbReference type="FunFam" id="3.40.640.10:FF:000001">
    <property type="entry name" value="Serine hydroxymethyltransferase"/>
    <property type="match status" value="1"/>
</dbReference>
<dbReference type="Gene3D" id="3.90.1150.10">
    <property type="entry name" value="Aspartate Aminotransferase, domain 1"/>
    <property type="match status" value="1"/>
</dbReference>
<dbReference type="Gene3D" id="3.40.640.10">
    <property type="entry name" value="Type I PLP-dependent aspartate aminotransferase-like (Major domain)"/>
    <property type="match status" value="1"/>
</dbReference>
<dbReference type="HAMAP" id="MF_00051">
    <property type="entry name" value="SHMT"/>
    <property type="match status" value="1"/>
</dbReference>
<dbReference type="InterPro" id="IPR015424">
    <property type="entry name" value="PyrdxlP-dep_Trfase"/>
</dbReference>
<dbReference type="InterPro" id="IPR015421">
    <property type="entry name" value="PyrdxlP-dep_Trfase_major"/>
</dbReference>
<dbReference type="InterPro" id="IPR015422">
    <property type="entry name" value="PyrdxlP-dep_Trfase_small"/>
</dbReference>
<dbReference type="InterPro" id="IPR001085">
    <property type="entry name" value="Ser_HO-MeTrfase"/>
</dbReference>
<dbReference type="InterPro" id="IPR049943">
    <property type="entry name" value="Ser_HO-MeTrfase-like"/>
</dbReference>
<dbReference type="InterPro" id="IPR019798">
    <property type="entry name" value="Ser_HO-MeTrfase_PLP_BS"/>
</dbReference>
<dbReference type="InterPro" id="IPR039429">
    <property type="entry name" value="SHMT-like_dom"/>
</dbReference>
<dbReference type="NCBIfam" id="NF000586">
    <property type="entry name" value="PRK00011.1"/>
    <property type="match status" value="1"/>
</dbReference>
<dbReference type="PANTHER" id="PTHR11680">
    <property type="entry name" value="SERINE HYDROXYMETHYLTRANSFERASE"/>
    <property type="match status" value="1"/>
</dbReference>
<dbReference type="PANTHER" id="PTHR11680:SF35">
    <property type="entry name" value="SERINE HYDROXYMETHYLTRANSFERASE 1"/>
    <property type="match status" value="1"/>
</dbReference>
<dbReference type="Pfam" id="PF00464">
    <property type="entry name" value="SHMT"/>
    <property type="match status" value="1"/>
</dbReference>
<dbReference type="PIRSF" id="PIRSF000412">
    <property type="entry name" value="SHMT"/>
    <property type="match status" value="1"/>
</dbReference>
<dbReference type="SUPFAM" id="SSF53383">
    <property type="entry name" value="PLP-dependent transferases"/>
    <property type="match status" value="1"/>
</dbReference>
<dbReference type="PROSITE" id="PS00096">
    <property type="entry name" value="SHMT"/>
    <property type="match status" value="1"/>
</dbReference>
<evidence type="ECO:0000255" key="1">
    <source>
        <dbReference type="HAMAP-Rule" id="MF_00051"/>
    </source>
</evidence>
<gene>
    <name evidence="1" type="primary">glyA</name>
    <name type="ordered locus">Ctha_1957</name>
</gene>
<organism>
    <name type="scientific">Chloroherpeton thalassium (strain ATCC 35110 / GB-78)</name>
    <dbReference type="NCBI Taxonomy" id="517418"/>
    <lineage>
        <taxon>Bacteria</taxon>
        <taxon>Pseudomonadati</taxon>
        <taxon>Chlorobiota</taxon>
        <taxon>Chlorobiia</taxon>
        <taxon>Chlorobiales</taxon>
        <taxon>Chloroherpetonaceae</taxon>
        <taxon>Chloroherpeton</taxon>
    </lineage>
</organism>
<accession>B3QUG2</accession>
<protein>
    <recommendedName>
        <fullName evidence="1">Serine hydroxymethyltransferase</fullName>
        <shortName evidence="1">SHMT</shortName>
        <shortName evidence="1">Serine methylase</shortName>
        <ecNumber evidence="1">2.1.2.1</ecNumber>
    </recommendedName>
</protein>
<keyword id="KW-0028">Amino-acid biosynthesis</keyword>
<keyword id="KW-0963">Cytoplasm</keyword>
<keyword id="KW-0554">One-carbon metabolism</keyword>
<keyword id="KW-0663">Pyridoxal phosphate</keyword>
<keyword id="KW-1185">Reference proteome</keyword>
<keyword id="KW-0808">Transferase</keyword>
<sequence length="440" mass="48300">MHLDILKNADPEVYAAIQSELERQTDTLELIASENFTSRAVMEACGSVMTNKYAEGYPGKRFYGGCEFVDVAEDLARDRAKKLFSCEYANVQPHSGSSANMAVIFTFCKPGDTILGFDLSHGGHLTHGSPVNFSGQFYNAHFYGVEKETGRIDMNRVEEKAKEVKPKLIICGASAYSRDWEYAEFRRIADSVDAILMADIAHPAGLIATGLLNDPMPHCHVVTTTTHKTLRGPRGGMILMGKDFENPMGIKAKTKTGERIKMVSELLDAMVMPGIQGGPLMHVIAGKAVAFGEALNPEYKQYMEQVRKNAAAMAEQFISLGYDIISGGTDNHLMLIDLRNKDITGKKTENLLHEAGITVNKNMVPFDDKSPFVTSGFRVGAAAMTTREMKEAEAKTIVKFIDKVISNAGSENISAICQEVKEEVNALCQQFPLYDFVPAS</sequence>